<organism>
    <name type="scientific">Chlorobium phaeobacteroides (strain BS1)</name>
    <dbReference type="NCBI Taxonomy" id="331678"/>
    <lineage>
        <taxon>Bacteria</taxon>
        <taxon>Pseudomonadati</taxon>
        <taxon>Chlorobiota</taxon>
        <taxon>Chlorobiia</taxon>
        <taxon>Chlorobiales</taxon>
        <taxon>Chlorobiaceae</taxon>
        <taxon>Chlorobium/Pelodictyon group</taxon>
        <taxon>Chlorobium</taxon>
    </lineage>
</organism>
<gene>
    <name evidence="1" type="primary">dnaK</name>
    <name type="ordered locus">Cphamn1_1707</name>
</gene>
<name>DNAK_CHLPB</name>
<reference key="1">
    <citation type="submission" date="2008-06" db="EMBL/GenBank/DDBJ databases">
        <title>Complete sequence of Chlorobium phaeobacteroides BS1.</title>
        <authorList>
            <consortium name="US DOE Joint Genome Institute"/>
            <person name="Lucas S."/>
            <person name="Copeland A."/>
            <person name="Lapidus A."/>
            <person name="Glavina del Rio T."/>
            <person name="Dalin E."/>
            <person name="Tice H."/>
            <person name="Bruce D."/>
            <person name="Goodwin L."/>
            <person name="Pitluck S."/>
            <person name="Schmutz J."/>
            <person name="Larimer F."/>
            <person name="Land M."/>
            <person name="Hauser L."/>
            <person name="Kyrpides N."/>
            <person name="Ovchinnikova G."/>
            <person name="Li T."/>
            <person name="Liu Z."/>
            <person name="Zhao F."/>
            <person name="Overmann J."/>
            <person name="Bryant D.A."/>
            <person name="Richardson P."/>
        </authorList>
    </citation>
    <scope>NUCLEOTIDE SEQUENCE [LARGE SCALE GENOMIC DNA]</scope>
    <source>
        <strain>BS1</strain>
    </source>
</reference>
<comment type="function">
    <text evidence="1">Acts as a chaperone.</text>
</comment>
<comment type="induction">
    <text evidence="1">By stress conditions e.g. heat shock.</text>
</comment>
<comment type="similarity">
    <text evidence="1">Belongs to the heat shock protein 70 family.</text>
</comment>
<accession>B3EKT9</accession>
<feature type="chain" id="PRO_1000119686" description="Chaperone protein DnaK">
    <location>
        <begin position="1"/>
        <end position="642"/>
    </location>
</feature>
<feature type="region of interest" description="Disordered" evidence="2">
    <location>
        <begin position="593"/>
        <end position="642"/>
    </location>
</feature>
<feature type="compositionally biased region" description="Polar residues" evidence="2">
    <location>
        <begin position="593"/>
        <end position="603"/>
    </location>
</feature>
<feature type="compositionally biased region" description="Basic and acidic residues" evidence="2">
    <location>
        <begin position="614"/>
        <end position="624"/>
    </location>
</feature>
<feature type="compositionally biased region" description="Acidic residues" evidence="2">
    <location>
        <begin position="626"/>
        <end position="636"/>
    </location>
</feature>
<feature type="modified residue" description="Phosphothreonine; by autocatalysis" evidence="1">
    <location>
        <position position="196"/>
    </location>
</feature>
<evidence type="ECO:0000255" key="1">
    <source>
        <dbReference type="HAMAP-Rule" id="MF_00332"/>
    </source>
</evidence>
<evidence type="ECO:0000256" key="2">
    <source>
        <dbReference type="SAM" id="MobiDB-lite"/>
    </source>
</evidence>
<dbReference type="EMBL" id="CP001101">
    <property type="protein sequence ID" value="ACE04625.1"/>
    <property type="molecule type" value="Genomic_DNA"/>
</dbReference>
<dbReference type="SMR" id="B3EKT9"/>
<dbReference type="STRING" id="331678.Cphamn1_1707"/>
<dbReference type="KEGG" id="cpb:Cphamn1_1707"/>
<dbReference type="eggNOG" id="COG0443">
    <property type="taxonomic scope" value="Bacteria"/>
</dbReference>
<dbReference type="HOGENOM" id="CLU_005965_2_1_10"/>
<dbReference type="OrthoDB" id="9766019at2"/>
<dbReference type="GO" id="GO:0005524">
    <property type="term" value="F:ATP binding"/>
    <property type="evidence" value="ECO:0007669"/>
    <property type="project" value="UniProtKB-UniRule"/>
</dbReference>
<dbReference type="GO" id="GO:0140662">
    <property type="term" value="F:ATP-dependent protein folding chaperone"/>
    <property type="evidence" value="ECO:0007669"/>
    <property type="project" value="InterPro"/>
</dbReference>
<dbReference type="GO" id="GO:0051082">
    <property type="term" value="F:unfolded protein binding"/>
    <property type="evidence" value="ECO:0007669"/>
    <property type="project" value="InterPro"/>
</dbReference>
<dbReference type="CDD" id="cd10234">
    <property type="entry name" value="ASKHA_NBD_HSP70_DnaK-like"/>
    <property type="match status" value="1"/>
</dbReference>
<dbReference type="FunFam" id="2.60.34.10:FF:000014">
    <property type="entry name" value="Chaperone protein DnaK HSP70"/>
    <property type="match status" value="1"/>
</dbReference>
<dbReference type="FunFam" id="3.30.30.30:FF:000005">
    <property type="entry name" value="Heat shock protein ssb1"/>
    <property type="match status" value="1"/>
</dbReference>
<dbReference type="FunFam" id="1.20.1270.10:FF:000001">
    <property type="entry name" value="Molecular chaperone DnaK"/>
    <property type="match status" value="1"/>
</dbReference>
<dbReference type="FunFam" id="3.30.420.40:FF:000004">
    <property type="entry name" value="Molecular chaperone DnaK"/>
    <property type="match status" value="1"/>
</dbReference>
<dbReference type="FunFam" id="3.90.640.10:FF:000003">
    <property type="entry name" value="Molecular chaperone DnaK"/>
    <property type="match status" value="1"/>
</dbReference>
<dbReference type="Gene3D" id="1.20.1270.10">
    <property type="match status" value="1"/>
</dbReference>
<dbReference type="Gene3D" id="3.30.420.40">
    <property type="match status" value="2"/>
</dbReference>
<dbReference type="Gene3D" id="3.90.640.10">
    <property type="entry name" value="Actin, Chain A, domain 4"/>
    <property type="match status" value="1"/>
</dbReference>
<dbReference type="Gene3D" id="2.60.34.10">
    <property type="entry name" value="Substrate Binding Domain Of DNAk, Chain A, domain 1"/>
    <property type="match status" value="1"/>
</dbReference>
<dbReference type="HAMAP" id="MF_00332">
    <property type="entry name" value="DnaK"/>
    <property type="match status" value="1"/>
</dbReference>
<dbReference type="InterPro" id="IPR043129">
    <property type="entry name" value="ATPase_NBD"/>
</dbReference>
<dbReference type="InterPro" id="IPR012725">
    <property type="entry name" value="Chaperone_DnaK"/>
</dbReference>
<dbReference type="InterPro" id="IPR018181">
    <property type="entry name" value="Heat_shock_70_CS"/>
</dbReference>
<dbReference type="InterPro" id="IPR029048">
    <property type="entry name" value="HSP70_C_sf"/>
</dbReference>
<dbReference type="InterPro" id="IPR029047">
    <property type="entry name" value="HSP70_peptide-bd_sf"/>
</dbReference>
<dbReference type="InterPro" id="IPR013126">
    <property type="entry name" value="Hsp_70_fam"/>
</dbReference>
<dbReference type="NCBIfam" id="NF001413">
    <property type="entry name" value="PRK00290.1"/>
    <property type="match status" value="1"/>
</dbReference>
<dbReference type="NCBIfam" id="NF003520">
    <property type="entry name" value="PRK05183.1"/>
    <property type="match status" value="1"/>
</dbReference>
<dbReference type="NCBIfam" id="TIGR02350">
    <property type="entry name" value="prok_dnaK"/>
    <property type="match status" value="1"/>
</dbReference>
<dbReference type="PANTHER" id="PTHR19375">
    <property type="entry name" value="HEAT SHOCK PROTEIN 70KDA"/>
    <property type="match status" value="1"/>
</dbReference>
<dbReference type="Pfam" id="PF00012">
    <property type="entry name" value="HSP70"/>
    <property type="match status" value="1"/>
</dbReference>
<dbReference type="PRINTS" id="PR00301">
    <property type="entry name" value="HEATSHOCK70"/>
</dbReference>
<dbReference type="SUPFAM" id="SSF53067">
    <property type="entry name" value="Actin-like ATPase domain"/>
    <property type="match status" value="2"/>
</dbReference>
<dbReference type="SUPFAM" id="SSF100934">
    <property type="entry name" value="Heat shock protein 70kD (HSP70), C-terminal subdomain"/>
    <property type="match status" value="1"/>
</dbReference>
<dbReference type="SUPFAM" id="SSF100920">
    <property type="entry name" value="Heat shock protein 70kD (HSP70), peptide-binding domain"/>
    <property type="match status" value="1"/>
</dbReference>
<dbReference type="PROSITE" id="PS00297">
    <property type="entry name" value="HSP70_1"/>
    <property type="match status" value="1"/>
</dbReference>
<dbReference type="PROSITE" id="PS00329">
    <property type="entry name" value="HSP70_2"/>
    <property type="match status" value="1"/>
</dbReference>
<dbReference type="PROSITE" id="PS01036">
    <property type="entry name" value="HSP70_3"/>
    <property type="match status" value="1"/>
</dbReference>
<protein>
    <recommendedName>
        <fullName evidence="1">Chaperone protein DnaK</fullName>
    </recommendedName>
    <alternativeName>
        <fullName evidence="1">HSP70</fullName>
    </alternativeName>
    <alternativeName>
        <fullName evidence="1">Heat shock 70 kDa protein</fullName>
    </alternativeName>
    <alternativeName>
        <fullName evidence="1">Heat shock protein 70</fullName>
    </alternativeName>
</protein>
<sequence length="642" mass="69655">MGKIIGIDLGTTNSCVAVMQGTKPTVIENSEGYRTTPSMVAFTKNGERLVGHAAKRQAITNAENTIFSIKRFMGRKFDEISNEKKIAPYKVTNVNGEARVEIGDKTYSPQEISAMILQKMKQTAEDFLGEKVTEAVITVPAYFNDAQRQATKDAGKIAGLEVKRIINEPTAASLSYGLDTKNENEKVAVFDLGGGTFDISILELGDGVFEVKSTDGDTHLGGDDFDQKIIDFLADEFKKQEGIDLRNDMMALQRLKEAAEKAKVELSSRTDTEINLPFITATQEGPKHLVVNLTRSKFEALCSDLFDSLIAPCKRAIKNSKLKTSEINEVVLVGGSTRIPKVQALVEELFGREPNRSVNPDEVVAVGAAIQGGVLSGDVSDVLLLDVTPLSLGIETLGGVMTKLIEANTTIPSKKQEVFSTAADNQTSVEVHVLQGERPMASDNKTLGRFHLGDIPPAPRGVPQIEVAFDIDSNGILHVSAKDKATGKEQSIRIEASGKLNDAEIEKMKEDAKTHAAEDEKRKEAIDLKNSADALIFSTEKQLGELGDKVPADKKTQLEEALEKLKEAHKSENVETIKPAMDELNTIWNDVASTMYQTPSGDTPPSEPETGASEESKGGDKTQGDGEVDAEYEVIDGNDKDK</sequence>
<proteinExistence type="inferred from homology"/>
<keyword id="KW-0067">ATP-binding</keyword>
<keyword id="KW-0143">Chaperone</keyword>
<keyword id="KW-0547">Nucleotide-binding</keyword>
<keyword id="KW-0597">Phosphoprotein</keyword>
<keyword id="KW-0346">Stress response</keyword>